<dbReference type="EC" id="3.1.-.-" evidence="1"/>
<dbReference type="EMBL" id="CP001399">
    <property type="protein sequence ID" value="ACP36190.1"/>
    <property type="molecule type" value="Genomic_DNA"/>
</dbReference>
<dbReference type="RefSeq" id="WP_012714149.1">
    <property type="nucleotide sequence ID" value="NC_012589.1"/>
</dbReference>
<dbReference type="SMR" id="C3MJN7"/>
<dbReference type="GeneID" id="7808065"/>
<dbReference type="KEGG" id="sis:LS215_2203"/>
<dbReference type="HOGENOM" id="CLU_023334_0_0_2"/>
<dbReference type="OrthoDB" id="31300at2157"/>
<dbReference type="Proteomes" id="UP000001747">
    <property type="component" value="Chromosome"/>
</dbReference>
<dbReference type="GO" id="GO:0005737">
    <property type="term" value="C:cytoplasm"/>
    <property type="evidence" value="ECO:0007669"/>
    <property type="project" value="UniProtKB-SubCell"/>
</dbReference>
<dbReference type="GO" id="GO:0004519">
    <property type="term" value="F:endonuclease activity"/>
    <property type="evidence" value="ECO:0007669"/>
    <property type="project" value="UniProtKB-UniRule"/>
</dbReference>
<dbReference type="GO" id="GO:0046872">
    <property type="term" value="F:metal ion binding"/>
    <property type="evidence" value="ECO:0007669"/>
    <property type="project" value="UniProtKB-UniRule"/>
</dbReference>
<dbReference type="GO" id="GO:0070651">
    <property type="term" value="P:nonfunctional rRNA decay"/>
    <property type="evidence" value="ECO:0007669"/>
    <property type="project" value="TreeGrafter"/>
</dbReference>
<dbReference type="GO" id="GO:0070966">
    <property type="term" value="P:nuclear-transcribed mRNA catabolic process, no-go decay"/>
    <property type="evidence" value="ECO:0007669"/>
    <property type="project" value="InterPro"/>
</dbReference>
<dbReference type="GO" id="GO:0070481">
    <property type="term" value="P:nuclear-transcribed mRNA catabolic process, non-stop decay"/>
    <property type="evidence" value="ECO:0007669"/>
    <property type="project" value="InterPro"/>
</dbReference>
<dbReference type="GO" id="GO:0032790">
    <property type="term" value="P:ribosome disassembly"/>
    <property type="evidence" value="ECO:0007669"/>
    <property type="project" value="TreeGrafter"/>
</dbReference>
<dbReference type="GO" id="GO:0071025">
    <property type="term" value="P:RNA surveillance"/>
    <property type="evidence" value="ECO:0007669"/>
    <property type="project" value="InterPro"/>
</dbReference>
<dbReference type="FunFam" id="2.30.30.870:FF:000002">
    <property type="entry name" value="Protein pelota homolog"/>
    <property type="match status" value="1"/>
</dbReference>
<dbReference type="FunFam" id="3.30.420.60:FF:000005">
    <property type="entry name" value="Protein pelota homolog"/>
    <property type="match status" value="1"/>
</dbReference>
<dbReference type="Gene3D" id="3.30.1330.30">
    <property type="match status" value="1"/>
</dbReference>
<dbReference type="Gene3D" id="3.30.420.60">
    <property type="entry name" value="eRF1 domain 2"/>
    <property type="match status" value="1"/>
</dbReference>
<dbReference type="Gene3D" id="2.30.30.870">
    <property type="entry name" value="Pelota, domain A"/>
    <property type="match status" value="1"/>
</dbReference>
<dbReference type="HAMAP" id="MF_01853">
    <property type="entry name" value="PelO"/>
    <property type="match status" value="1"/>
</dbReference>
<dbReference type="InterPro" id="IPR042226">
    <property type="entry name" value="eFR1_2_sf"/>
</dbReference>
<dbReference type="InterPro" id="IPR005140">
    <property type="entry name" value="eRF1_1_Pelota"/>
</dbReference>
<dbReference type="InterPro" id="IPR005142">
    <property type="entry name" value="eRF1_3"/>
</dbReference>
<dbReference type="InterPro" id="IPR038069">
    <property type="entry name" value="Pelota/DOM34_N"/>
</dbReference>
<dbReference type="InterPro" id="IPR023521">
    <property type="entry name" value="Pelota_arc"/>
</dbReference>
<dbReference type="InterPro" id="IPR029064">
    <property type="entry name" value="Ribosomal_eL30-like_sf"/>
</dbReference>
<dbReference type="InterPro" id="IPR004405">
    <property type="entry name" value="Transl-rel_pelota"/>
</dbReference>
<dbReference type="NCBIfam" id="TIGR00111">
    <property type="entry name" value="pelota"/>
    <property type="match status" value="1"/>
</dbReference>
<dbReference type="PANTHER" id="PTHR10853">
    <property type="entry name" value="PELOTA"/>
    <property type="match status" value="1"/>
</dbReference>
<dbReference type="PANTHER" id="PTHR10853:SF0">
    <property type="entry name" value="PROTEIN PELOTA HOMOLOG"/>
    <property type="match status" value="1"/>
</dbReference>
<dbReference type="Pfam" id="PF03463">
    <property type="entry name" value="eRF1_1"/>
    <property type="match status" value="1"/>
</dbReference>
<dbReference type="Pfam" id="PF03465">
    <property type="entry name" value="eRF1_3"/>
    <property type="match status" value="1"/>
</dbReference>
<dbReference type="SMART" id="SM01194">
    <property type="entry name" value="eRF1_1"/>
    <property type="match status" value="1"/>
</dbReference>
<dbReference type="SUPFAM" id="SSF159065">
    <property type="entry name" value="Dom34/Pelota N-terminal domain-like"/>
    <property type="match status" value="1"/>
</dbReference>
<dbReference type="SUPFAM" id="SSF55315">
    <property type="entry name" value="L30e-like"/>
    <property type="match status" value="1"/>
</dbReference>
<dbReference type="SUPFAM" id="SSF53137">
    <property type="entry name" value="Translational machinery components"/>
    <property type="match status" value="1"/>
</dbReference>
<keyword id="KW-0963">Cytoplasm</keyword>
<keyword id="KW-0255">Endonuclease</keyword>
<keyword id="KW-0378">Hydrolase</keyword>
<keyword id="KW-0479">Metal-binding</keyword>
<keyword id="KW-0540">Nuclease</keyword>
<reference key="1">
    <citation type="journal article" date="2009" name="Proc. Natl. Acad. Sci. U.S.A.">
        <title>Biogeography of the Sulfolobus islandicus pan-genome.</title>
        <authorList>
            <person name="Reno M.L."/>
            <person name="Held N.L."/>
            <person name="Fields C.J."/>
            <person name="Burke P.V."/>
            <person name="Whitaker R.J."/>
        </authorList>
    </citation>
    <scope>NUCLEOTIDE SEQUENCE [LARGE SCALE GENOMIC DNA]</scope>
    <source>
        <strain>L.S.2.15 / Lassen #1</strain>
    </source>
</reference>
<protein>
    <recommendedName>
        <fullName evidence="1">Protein pelota homolog</fullName>
        <ecNumber evidence="1">3.1.-.-</ecNumber>
    </recommendedName>
</protein>
<feature type="chain" id="PRO_1000216140" description="Protein pelota homolog">
    <location>
        <begin position="1"/>
        <end position="344"/>
    </location>
</feature>
<accession>C3MJN7</accession>
<comment type="function">
    <text evidence="1">May function in recognizing stalled ribosomes, interact with stem-loop structures in stalled mRNA molecules, and effect endonucleolytic cleavage of the mRNA. May play a role in the release non-functional ribosomes and degradation of damaged mRNAs. Has endoribonuclease activity.</text>
</comment>
<comment type="cofactor">
    <cofactor evidence="1">
        <name>a divalent metal cation</name>
        <dbReference type="ChEBI" id="CHEBI:60240"/>
    </cofactor>
</comment>
<comment type="subunit">
    <text evidence="1">Monomer.</text>
</comment>
<comment type="subcellular location">
    <subcellularLocation>
        <location evidence="1">Cytoplasm</location>
    </subcellularLocation>
</comment>
<comment type="domain">
    <text evidence="1">The N-terminal domain has the RNA-binding Sm fold. It harbors the endoribonuclease activity.</text>
</comment>
<comment type="similarity">
    <text evidence="1">Belongs to the eukaryotic release factor 1 family. Pelota subfamily.</text>
</comment>
<evidence type="ECO:0000255" key="1">
    <source>
        <dbReference type="HAMAP-Rule" id="MF_01853"/>
    </source>
</evidence>
<gene>
    <name evidence="1" type="primary">pelA</name>
    <name type="ordered locus">LS215_2203</name>
</gene>
<name>PELO_SACI2</name>
<organism>
    <name type="scientific">Saccharolobus islandicus (strain L.S.2.15 / Lassen #1)</name>
    <name type="common">Sulfolobus islandicus</name>
    <dbReference type="NCBI Taxonomy" id="429572"/>
    <lineage>
        <taxon>Archaea</taxon>
        <taxon>Thermoproteota</taxon>
        <taxon>Thermoprotei</taxon>
        <taxon>Sulfolobales</taxon>
        <taxon>Sulfolobaceae</taxon>
        <taxon>Saccharolobus</taxon>
    </lineage>
</organism>
<proteinExistence type="inferred from homology"/>
<sequence length="344" mass="39399">MRILEFDEKRQAAKLHIESEDDLWILHLILEKGDKVVAKTTRDIGLGKESRRIPMTIVLKVDYTEFQEFTNRLRIHGIIEDAPERFGIRGAHHTINLDIGDEIIIIKQQWNKYALDKLKKQADKRSKIIIALVDFDEYLIAIPFEQGIKILSEKSLRSLNEEEGIIEQNALEVATELAEYVKQYNPDAILLAGPGFFKEEVAKKVNNILKNKKVYIDSVSSATRAGLHEILKRDIIDKIMSDYEIAIGAKKMEKAMELLAKQPELVTYGLEQVKNAVEMGAVETVLLIEDLLSSNNQERLAIERILEDIENKRGEIILVPKESPIYFELKNLTGILAILRFRIN</sequence>